<accession>B1JDR0</accession>
<reference key="1">
    <citation type="submission" date="2008-02" db="EMBL/GenBank/DDBJ databases">
        <title>Complete sequence of Pseudomonas putida W619.</title>
        <authorList>
            <person name="Copeland A."/>
            <person name="Lucas S."/>
            <person name="Lapidus A."/>
            <person name="Barry K."/>
            <person name="Detter J.C."/>
            <person name="Glavina del Rio T."/>
            <person name="Dalin E."/>
            <person name="Tice H."/>
            <person name="Pitluck S."/>
            <person name="Chain P."/>
            <person name="Malfatti S."/>
            <person name="Shin M."/>
            <person name="Vergez L."/>
            <person name="Schmutz J."/>
            <person name="Larimer F."/>
            <person name="Land M."/>
            <person name="Hauser L."/>
            <person name="Kyrpides N."/>
            <person name="Kim E."/>
            <person name="Taghavi S."/>
            <person name="Vangronsveld D."/>
            <person name="van der Lelie D."/>
            <person name="Richardson P."/>
        </authorList>
    </citation>
    <scope>NUCLEOTIDE SEQUENCE [LARGE SCALE GENOMIC DNA]</scope>
    <source>
        <strain>W619</strain>
    </source>
</reference>
<evidence type="ECO:0000255" key="1">
    <source>
        <dbReference type="HAMAP-Rule" id="MF_00682"/>
    </source>
</evidence>
<keyword id="KW-0143">Chaperone</keyword>
<name>HSCB_PSEPW</name>
<comment type="function">
    <text evidence="1">Co-chaperone involved in the maturation of iron-sulfur cluster-containing proteins. Seems to help targeting proteins to be folded toward HscA.</text>
</comment>
<comment type="subunit">
    <text evidence="1">Interacts with HscA and stimulates its ATPase activity.</text>
</comment>
<comment type="similarity">
    <text evidence="1">Belongs to the HscB family.</text>
</comment>
<feature type="chain" id="PRO_1000131745" description="Co-chaperone protein HscB homolog">
    <location>
        <begin position="1"/>
        <end position="173"/>
    </location>
</feature>
<feature type="domain" description="J" evidence="1">
    <location>
        <begin position="5"/>
        <end position="77"/>
    </location>
</feature>
<organism>
    <name type="scientific">Pseudomonas putida (strain W619)</name>
    <dbReference type="NCBI Taxonomy" id="390235"/>
    <lineage>
        <taxon>Bacteria</taxon>
        <taxon>Pseudomonadati</taxon>
        <taxon>Pseudomonadota</taxon>
        <taxon>Gammaproteobacteria</taxon>
        <taxon>Pseudomonadales</taxon>
        <taxon>Pseudomonadaceae</taxon>
        <taxon>Pseudomonas</taxon>
    </lineage>
</organism>
<proteinExistence type="inferred from homology"/>
<gene>
    <name evidence="1" type="primary">hscB</name>
    <name type="ordered locus">PputW619_4333</name>
</gene>
<protein>
    <recommendedName>
        <fullName evidence="1">Co-chaperone protein HscB homolog</fullName>
    </recommendedName>
</protein>
<sequence length="173" mass="20283">MGTPCHFALFDLQPCFRLDLDKLATRYRELAREVHPDRFADASEREQRVALEKSAALNDAYQTLRSAPRRARYLLAIGGHEVPQEVTVHDPDFLLQQMQWREELEELQDEADLDGVAVFKKRLKAAQEQLNEDFAACWDVPAERDKAERLMRRMQFLDKLAQEVRQLEERLDD</sequence>
<dbReference type="EMBL" id="CP000949">
    <property type="protein sequence ID" value="ACA74813.1"/>
    <property type="molecule type" value="Genomic_DNA"/>
</dbReference>
<dbReference type="SMR" id="B1JDR0"/>
<dbReference type="STRING" id="390235.PputW619_4333"/>
<dbReference type="KEGG" id="ppw:PputW619_4333"/>
<dbReference type="eggNOG" id="COG1076">
    <property type="taxonomic scope" value="Bacteria"/>
</dbReference>
<dbReference type="HOGENOM" id="CLU_068529_2_0_6"/>
<dbReference type="OrthoDB" id="287587at2"/>
<dbReference type="GO" id="GO:1990230">
    <property type="term" value="C:iron-sulfur cluster transfer complex"/>
    <property type="evidence" value="ECO:0007669"/>
    <property type="project" value="TreeGrafter"/>
</dbReference>
<dbReference type="GO" id="GO:0001671">
    <property type="term" value="F:ATPase activator activity"/>
    <property type="evidence" value="ECO:0007669"/>
    <property type="project" value="InterPro"/>
</dbReference>
<dbReference type="GO" id="GO:0051087">
    <property type="term" value="F:protein-folding chaperone binding"/>
    <property type="evidence" value="ECO:0007669"/>
    <property type="project" value="InterPro"/>
</dbReference>
<dbReference type="GO" id="GO:0044571">
    <property type="term" value="P:[2Fe-2S] cluster assembly"/>
    <property type="evidence" value="ECO:0007669"/>
    <property type="project" value="InterPro"/>
</dbReference>
<dbReference type="GO" id="GO:0051259">
    <property type="term" value="P:protein complex oligomerization"/>
    <property type="evidence" value="ECO:0007669"/>
    <property type="project" value="InterPro"/>
</dbReference>
<dbReference type="GO" id="GO:0006457">
    <property type="term" value="P:protein folding"/>
    <property type="evidence" value="ECO:0007669"/>
    <property type="project" value="UniProtKB-UniRule"/>
</dbReference>
<dbReference type="CDD" id="cd06257">
    <property type="entry name" value="DnaJ"/>
    <property type="match status" value="1"/>
</dbReference>
<dbReference type="Gene3D" id="1.10.287.110">
    <property type="entry name" value="DnaJ domain"/>
    <property type="match status" value="1"/>
</dbReference>
<dbReference type="Gene3D" id="1.20.1280.20">
    <property type="entry name" value="HscB, C-terminal domain"/>
    <property type="match status" value="1"/>
</dbReference>
<dbReference type="HAMAP" id="MF_00682">
    <property type="entry name" value="HscB"/>
    <property type="match status" value="1"/>
</dbReference>
<dbReference type="InterPro" id="IPR001623">
    <property type="entry name" value="DnaJ_domain"/>
</dbReference>
<dbReference type="InterPro" id="IPR004640">
    <property type="entry name" value="HscB"/>
</dbReference>
<dbReference type="InterPro" id="IPR036386">
    <property type="entry name" value="HscB_C_sf"/>
</dbReference>
<dbReference type="InterPro" id="IPR009073">
    <property type="entry name" value="HscB_oligo_C"/>
</dbReference>
<dbReference type="InterPro" id="IPR036869">
    <property type="entry name" value="J_dom_sf"/>
</dbReference>
<dbReference type="NCBIfam" id="TIGR00714">
    <property type="entry name" value="hscB"/>
    <property type="match status" value="1"/>
</dbReference>
<dbReference type="NCBIfam" id="NF001420">
    <property type="entry name" value="PRK00294.1"/>
    <property type="match status" value="1"/>
</dbReference>
<dbReference type="PANTHER" id="PTHR14021">
    <property type="entry name" value="IRON-SULFUR CLUSTER CO-CHAPERONE PROTEIN HSCB"/>
    <property type="match status" value="1"/>
</dbReference>
<dbReference type="PANTHER" id="PTHR14021:SF15">
    <property type="entry name" value="IRON-SULFUR CLUSTER CO-CHAPERONE PROTEIN HSCB"/>
    <property type="match status" value="1"/>
</dbReference>
<dbReference type="Pfam" id="PF00226">
    <property type="entry name" value="DnaJ"/>
    <property type="match status" value="1"/>
</dbReference>
<dbReference type="Pfam" id="PF07743">
    <property type="entry name" value="HSCB_C"/>
    <property type="match status" value="1"/>
</dbReference>
<dbReference type="SMART" id="SM00271">
    <property type="entry name" value="DnaJ"/>
    <property type="match status" value="1"/>
</dbReference>
<dbReference type="SUPFAM" id="SSF46565">
    <property type="entry name" value="Chaperone J-domain"/>
    <property type="match status" value="1"/>
</dbReference>
<dbReference type="SUPFAM" id="SSF47144">
    <property type="entry name" value="HSC20 (HSCB), C-terminal oligomerisation domain"/>
    <property type="match status" value="1"/>
</dbReference>
<dbReference type="PROSITE" id="PS50076">
    <property type="entry name" value="DNAJ_2"/>
    <property type="match status" value="1"/>
</dbReference>